<evidence type="ECO:0000250" key="1">
    <source>
        <dbReference type="UniProtKB" id="Q9H2W6"/>
    </source>
</evidence>
<evidence type="ECO:0000255" key="2"/>
<evidence type="ECO:0000305" key="3"/>
<evidence type="ECO:0007744" key="4">
    <source>
    </source>
</evidence>
<proteinExistence type="evidence at protein level"/>
<keyword id="KW-0007">Acetylation</keyword>
<keyword id="KW-0496">Mitochondrion</keyword>
<keyword id="KW-1185">Reference proteome</keyword>
<keyword id="KW-0687">Ribonucleoprotein</keyword>
<keyword id="KW-0689">Ribosomal protein</keyword>
<keyword id="KW-0809">Transit peptide</keyword>
<comment type="subunit">
    <text evidence="1">Component of the mitochondrial ribosome large subunit (39S) which comprises a 16S rRNA and about 50 distinct proteins.</text>
</comment>
<comment type="subcellular location">
    <subcellularLocation>
        <location evidence="1">Mitochondrion</location>
    </subcellularLocation>
</comment>
<comment type="similarity">
    <text evidence="3">Belongs to the mitochondrion-specific ribosomal protein mL46 family.</text>
</comment>
<gene>
    <name type="primary">Mrpl46</name>
</gene>
<dbReference type="EMBL" id="AF217090">
    <property type="protein sequence ID" value="AAG44099.1"/>
    <property type="molecule type" value="mRNA"/>
</dbReference>
<dbReference type="EMBL" id="BC061094">
    <property type="protein sequence ID" value="AAH61094.1"/>
    <property type="molecule type" value="mRNA"/>
</dbReference>
<dbReference type="CCDS" id="CCDS21373.1"/>
<dbReference type="RefSeq" id="NP_075820.1">
    <property type="nucleotide sequence ID" value="NM_023331.2"/>
</dbReference>
<dbReference type="SMR" id="Q9EQI8"/>
<dbReference type="BioGRID" id="212093">
    <property type="interactions" value="30"/>
</dbReference>
<dbReference type="ComplexPortal" id="CPX-5302">
    <property type="entry name" value="39S mitochondrial large ribosomal subunit"/>
</dbReference>
<dbReference type="FunCoup" id="Q9EQI8">
    <property type="interactions" value="1424"/>
</dbReference>
<dbReference type="STRING" id="10090.ENSMUSP00000032841"/>
<dbReference type="GlyGen" id="Q9EQI8">
    <property type="glycosylation" value="1 site, 1 O-linked glycan (1 site)"/>
</dbReference>
<dbReference type="iPTMnet" id="Q9EQI8"/>
<dbReference type="PhosphoSitePlus" id="Q9EQI8"/>
<dbReference type="SwissPalm" id="Q9EQI8"/>
<dbReference type="jPOST" id="Q9EQI8"/>
<dbReference type="PaxDb" id="10090-ENSMUSP00000032841"/>
<dbReference type="PeptideAtlas" id="Q9EQI8"/>
<dbReference type="ProteomicsDB" id="299833"/>
<dbReference type="Pumba" id="Q9EQI8"/>
<dbReference type="Antibodypedia" id="58578">
    <property type="antibodies" value="183 antibodies from 27 providers"/>
</dbReference>
<dbReference type="DNASU" id="67308"/>
<dbReference type="Ensembl" id="ENSMUST00000032841.7">
    <property type="protein sequence ID" value="ENSMUSP00000032841.6"/>
    <property type="gene ID" value="ENSMUSG00000030612.7"/>
</dbReference>
<dbReference type="GeneID" id="67308"/>
<dbReference type="KEGG" id="mmu:67308"/>
<dbReference type="UCSC" id="uc009hxl.1">
    <property type="organism name" value="mouse"/>
</dbReference>
<dbReference type="AGR" id="MGI:1914558"/>
<dbReference type="CTD" id="26589"/>
<dbReference type="MGI" id="MGI:1914558">
    <property type="gene designation" value="Mrpl46"/>
</dbReference>
<dbReference type="VEuPathDB" id="HostDB:ENSMUSG00000030612"/>
<dbReference type="eggNOG" id="KOG4548">
    <property type="taxonomic scope" value="Eukaryota"/>
</dbReference>
<dbReference type="GeneTree" id="ENSGT00390000015400"/>
<dbReference type="HOGENOM" id="CLU_079736_1_0_1"/>
<dbReference type="InParanoid" id="Q9EQI8"/>
<dbReference type="OMA" id="EKWDLYA"/>
<dbReference type="OrthoDB" id="194611at2759"/>
<dbReference type="PhylomeDB" id="Q9EQI8"/>
<dbReference type="TreeFam" id="TF324756"/>
<dbReference type="Reactome" id="R-MMU-5389840">
    <property type="pathway name" value="Mitochondrial translation elongation"/>
</dbReference>
<dbReference type="Reactome" id="R-MMU-5419276">
    <property type="pathway name" value="Mitochondrial translation termination"/>
</dbReference>
<dbReference type="BioGRID-ORCS" id="67308">
    <property type="hits" value="26 hits in 78 CRISPR screens"/>
</dbReference>
<dbReference type="ChiTaRS" id="Mrpl46">
    <property type="organism name" value="mouse"/>
</dbReference>
<dbReference type="PRO" id="PR:Q9EQI8"/>
<dbReference type="Proteomes" id="UP000000589">
    <property type="component" value="Chromosome 7"/>
</dbReference>
<dbReference type="RNAct" id="Q9EQI8">
    <property type="molecule type" value="protein"/>
</dbReference>
<dbReference type="Bgee" id="ENSMUSG00000030612">
    <property type="expression patterns" value="Expressed in facial nucleus and 263 other cell types or tissues"/>
</dbReference>
<dbReference type="GO" id="GO:0030054">
    <property type="term" value="C:cell junction"/>
    <property type="evidence" value="ECO:0007669"/>
    <property type="project" value="Ensembl"/>
</dbReference>
<dbReference type="GO" id="GO:0005829">
    <property type="term" value="C:cytosol"/>
    <property type="evidence" value="ECO:0007669"/>
    <property type="project" value="Ensembl"/>
</dbReference>
<dbReference type="GO" id="GO:0005743">
    <property type="term" value="C:mitochondrial inner membrane"/>
    <property type="evidence" value="ECO:0000303"/>
    <property type="project" value="ComplexPortal"/>
</dbReference>
<dbReference type="GO" id="GO:0005762">
    <property type="term" value="C:mitochondrial large ribosomal subunit"/>
    <property type="evidence" value="ECO:0000250"/>
    <property type="project" value="UniProtKB"/>
</dbReference>
<dbReference type="GO" id="GO:0005739">
    <property type="term" value="C:mitochondrion"/>
    <property type="evidence" value="ECO:0007005"/>
    <property type="project" value="MGI"/>
</dbReference>
<dbReference type="GO" id="GO:0005654">
    <property type="term" value="C:nucleoplasm"/>
    <property type="evidence" value="ECO:0007669"/>
    <property type="project" value="Ensembl"/>
</dbReference>
<dbReference type="GO" id="GO:0003735">
    <property type="term" value="F:structural constituent of ribosome"/>
    <property type="evidence" value="ECO:0007669"/>
    <property type="project" value="InterPro"/>
</dbReference>
<dbReference type="GO" id="GO:0032543">
    <property type="term" value="P:mitochondrial translation"/>
    <property type="evidence" value="ECO:0000303"/>
    <property type="project" value="ComplexPortal"/>
</dbReference>
<dbReference type="CDD" id="cd04661">
    <property type="entry name" value="NUDIX_MRP_L46"/>
    <property type="match status" value="1"/>
</dbReference>
<dbReference type="FunFam" id="3.90.79.10:FF:000018">
    <property type="entry name" value="39S ribosomal protein L46, mitochondrial"/>
    <property type="match status" value="1"/>
</dbReference>
<dbReference type="Gene3D" id="3.90.79.10">
    <property type="entry name" value="Nucleoside Triphosphate Pyrophosphohydrolase"/>
    <property type="match status" value="1"/>
</dbReference>
<dbReference type="InterPro" id="IPR015797">
    <property type="entry name" value="NUDIX_hydrolase-like_dom_sf"/>
</dbReference>
<dbReference type="InterPro" id="IPR040008">
    <property type="entry name" value="Ribosomal_mL46"/>
</dbReference>
<dbReference type="InterPro" id="IPR021757">
    <property type="entry name" value="Ribosomal_mL46_N"/>
</dbReference>
<dbReference type="InterPro" id="IPR033650">
    <property type="entry name" value="Ribosomal_mL46_NUDIX"/>
</dbReference>
<dbReference type="PANTHER" id="PTHR13124">
    <property type="entry name" value="39S RIBOSOMAL PROTEIN L46, MITOCHONDRIAL PRECURSOR-RELATED"/>
    <property type="match status" value="1"/>
</dbReference>
<dbReference type="PANTHER" id="PTHR13124:SF12">
    <property type="entry name" value="LARGE RIBOSOMAL SUBUNIT PROTEIN ML46"/>
    <property type="match status" value="1"/>
</dbReference>
<dbReference type="Pfam" id="PF11788">
    <property type="entry name" value="MRP-L46"/>
    <property type="match status" value="1"/>
</dbReference>
<dbReference type="SUPFAM" id="SSF55811">
    <property type="entry name" value="Nudix"/>
    <property type="match status" value="1"/>
</dbReference>
<name>RM46_MOUSE</name>
<protein>
    <recommendedName>
        <fullName evidence="3">Large ribosomal subunit protein mL46</fullName>
    </recommendedName>
    <alternativeName>
        <fullName>39S ribosomal protein L46, mitochondrial</fullName>
        <shortName>L46mt</shortName>
        <shortName>MRP-L46</shortName>
    </alternativeName>
</protein>
<organism>
    <name type="scientific">Mus musculus</name>
    <name type="common">Mouse</name>
    <dbReference type="NCBI Taxonomy" id="10090"/>
    <lineage>
        <taxon>Eukaryota</taxon>
        <taxon>Metazoa</taxon>
        <taxon>Chordata</taxon>
        <taxon>Craniata</taxon>
        <taxon>Vertebrata</taxon>
        <taxon>Euteleostomi</taxon>
        <taxon>Mammalia</taxon>
        <taxon>Eutheria</taxon>
        <taxon>Euarchontoglires</taxon>
        <taxon>Glires</taxon>
        <taxon>Rodentia</taxon>
        <taxon>Myomorpha</taxon>
        <taxon>Muroidea</taxon>
        <taxon>Muridae</taxon>
        <taxon>Murinae</taxon>
        <taxon>Mus</taxon>
        <taxon>Mus</taxon>
    </lineage>
</organism>
<reference key="1">
    <citation type="journal article" date="2001" name="DNA Seq.">
        <title>Cloning, mapping and expression analysis of C15orf4, a novel human gene with homology to the yeast mitochondrial ribosomal protein Ym130 gene.</title>
        <authorList>
            <person name="Carim-Todd L."/>
            <person name="Sumoy L."/>
            <person name="Andreu N."/>
            <person name="Estivill X."/>
            <person name="Escarceller M."/>
        </authorList>
    </citation>
    <scope>NUCLEOTIDE SEQUENCE [MRNA]</scope>
</reference>
<reference key="2">
    <citation type="journal article" date="2004" name="Genome Res.">
        <title>The status, quality, and expansion of the NIH full-length cDNA project: the Mammalian Gene Collection (MGC).</title>
        <authorList>
            <consortium name="The MGC Project Team"/>
        </authorList>
    </citation>
    <scope>NUCLEOTIDE SEQUENCE [LARGE SCALE MRNA]</scope>
    <source>
        <tissue>Testis</tissue>
    </source>
</reference>
<reference key="3">
    <citation type="journal article" date="2010" name="Cell">
        <title>A tissue-specific atlas of mouse protein phosphorylation and expression.</title>
        <authorList>
            <person name="Huttlin E.L."/>
            <person name="Jedrychowski M.P."/>
            <person name="Elias J.E."/>
            <person name="Goswami T."/>
            <person name="Rad R."/>
            <person name="Beausoleil S.A."/>
            <person name="Villen J."/>
            <person name="Haas W."/>
            <person name="Sowa M.E."/>
            <person name="Gygi S.P."/>
        </authorList>
    </citation>
    <scope>IDENTIFICATION BY MASS SPECTROMETRY [LARGE SCALE ANALYSIS]</scope>
    <source>
        <tissue>Brain</tissue>
        <tissue>Brown adipose tissue</tissue>
        <tissue>Heart</tissue>
        <tissue>Kidney</tissue>
        <tissue>Liver</tissue>
        <tissue>Spleen</tissue>
        <tissue>Testis</tissue>
    </source>
</reference>
<reference key="4">
    <citation type="journal article" date="2013" name="Mol. Cell">
        <title>SIRT5-mediated lysine desuccinylation impacts diverse metabolic pathways.</title>
        <authorList>
            <person name="Park J."/>
            <person name="Chen Y."/>
            <person name="Tishkoff D.X."/>
            <person name="Peng C."/>
            <person name="Tan M."/>
            <person name="Dai L."/>
            <person name="Xie Z."/>
            <person name="Zhang Y."/>
            <person name="Zwaans B.M."/>
            <person name="Skinner M.E."/>
            <person name="Lombard D.B."/>
            <person name="Zhao Y."/>
        </authorList>
    </citation>
    <scope>SUCCINYLATION [LARGE SCALE ANALYSIS] AT LYS-217 AND LYS-246</scope>
    <scope>IDENTIFICATION BY MASS SPECTROMETRY [LARGE SCALE ANALYSIS]</scope>
    <source>
        <tissue>Liver</tissue>
    </source>
</reference>
<sequence length="283" mass="32132">MAAPVGRTLLGLARGWRQLDRFWAGSSRGLSLEAASSSSRSPWRLSGALCLQRPPLITKALTPLQEEMAGLLQQIEVERSLYSDHELRALDEAQRLAKKKADLYDEEQEQGITLAQDLEDMWEQAFLQFRPGARETEADKKNDRTSLHRKLDRNLVLLVREKLGDQDVWMLPQVEWQPGETLRGTAERILATLSENNMEAKFLGNAPCGHYKFKFPKAIQTESDLGVKVFFFKALLLTGDFVQAGKKSRHVWASKEELGDYLQPKYLAQVRRFLLDSDGLSCL</sequence>
<feature type="transit peptide" description="Mitochondrion" evidence="2">
    <location>
        <begin position="1"/>
        <end status="unknown"/>
    </location>
</feature>
<feature type="chain" id="PRO_0000030577" description="Large ribosomal subunit protein mL46">
    <location>
        <begin status="unknown"/>
        <end position="283"/>
    </location>
</feature>
<feature type="modified residue" description="N6-succinyllysine" evidence="4">
    <location>
        <position position="217"/>
    </location>
</feature>
<feature type="modified residue" description="N6-acetyllysine" evidence="1">
    <location>
        <position position="228"/>
    </location>
</feature>
<feature type="modified residue" description="N6-succinyllysine" evidence="4">
    <location>
        <position position="246"/>
    </location>
</feature>
<accession>Q9EQI8</accession>